<gene>
    <name type="primary">ALG8</name>
    <name type="ORF">CHGG_02940</name>
</gene>
<comment type="function">
    <text evidence="1">Dolichyl pyrophosphate Glc1Man9GlcNAc2 alpha-1,3-glucosyltransferase that operates in the biosynthetic pathway of dolichol-linked oligosaccharides, the glycan precursors employed in protein asparagine (N)-glycosylation. The assembly of dolichol-linked oligosaccharides begins on the cytosolic side of the endoplasmic reticulum membrane and finishes in its lumen. The sequential addition of sugars to dolichol pyrophosphate produces dolichol-linked oligosaccharides containing fourteen sugars, including two GlcNAcs, nine mannoses and three glucoses. Once assembled, the oligosaccharide is transferred from the lipid to nascent proteins by oligosaccharyltransferases. In the lumen of the endoplasmic reticulum, adds the second glucose residue from dolichyl phosphate glucose (Dol-P-Glc) onto the lipid-linked oligosaccharide intermediate Glc(1)Man(9)GlcNAc(2)-PP-Dol to produce Glc(2)Man(9)GlcNAc(2)-PP-Dol.</text>
</comment>
<comment type="catalytic activity">
    <reaction evidence="1">
        <text>an alpha-D-Glc-(1-&gt;3)-alpha-D-Man-(1-&gt;2)-alpha-D-Man-(1-&gt;2)-alpha-D-Man-(1-&gt;3)-[alpha-D-Man-(1-&gt;2)-alpha-D-Man-(1-&gt;3)-[alpha-D-Man-(1-&gt;2)-alpha-D-Man-(1-&gt;6)]-alpha-D-Man-(1-&gt;6)]-beta-D-Man-(1-&gt;4)-beta-D-GlcNAc-(1-&gt;4)-alpha-D-GlcNAc-diphospho-di-trans,poly-cis-dolichol + a di-trans,poly-cis-dolichyl beta-D-glucosyl phosphate = an alpha-D-Glc-(1-&gt;3)-alpha-D-Glc-(1-&gt;3)-alpha-D-Man-(1-&gt;2)-alpha-D-Man-(1-&gt;2)-alpha-D-Man-(1-&gt;3)-[alpha-D-Man-(1-&gt;2)-alpha-D-Man-(1-&gt;3)-[alpha-D-Man-(1-&gt;2)-alpha-D-Man-(1-&gt;6)]-alpha-D-Man-(1-&gt;6)]-beta-D-Man-(1-&gt;4)-beta-D-GlcNAc-(1-&gt;4)-alpha-D-GlcNAc-diphospho-di-trans,poly-cis-dolichol + a di-trans,poly-cis-dolichyl phosphate + H(+)</text>
        <dbReference type="Rhea" id="RHEA:31307"/>
        <dbReference type="Rhea" id="RHEA-COMP:19498"/>
        <dbReference type="Rhea" id="RHEA-COMP:19502"/>
        <dbReference type="Rhea" id="RHEA-COMP:19521"/>
        <dbReference type="Rhea" id="RHEA-COMP:19522"/>
        <dbReference type="ChEBI" id="CHEBI:15378"/>
        <dbReference type="ChEBI" id="CHEBI:57525"/>
        <dbReference type="ChEBI" id="CHEBI:57683"/>
        <dbReference type="ChEBI" id="CHEBI:132521"/>
        <dbReference type="ChEBI" id="CHEBI:132522"/>
        <dbReference type="EC" id="2.4.1.265"/>
    </reaction>
    <physiologicalReaction direction="left-to-right" evidence="1">
        <dbReference type="Rhea" id="RHEA:31308"/>
    </physiologicalReaction>
</comment>
<comment type="pathway">
    <text evidence="1">Protein modification; protein glycosylation.</text>
</comment>
<comment type="subcellular location">
    <subcellularLocation>
        <location evidence="1">Endoplasmic reticulum membrane</location>
        <topology evidence="2">Multi-pass membrane protein</topology>
    </subcellularLocation>
</comment>
<comment type="similarity">
    <text evidence="3">Belongs to the ALG6/ALG8 glucosyltransferase family.</text>
</comment>
<sequence length="474" mass="53203">MSEIYPSLAQCAIVAGALKILLFPAYKSTDFEVHRNWLAITNSFPLWDWYYEKTSEWTLDYPPFFAYFEWVMSQVAKLVDPAMLKVYNLEFIDSSHGASKRAAQAAAISILLSPGLFIIDHIHFQYNGAMYGILIASLVLARKKSTLLWSGLLFAALLCMKHIYLYLAPAYFVFLLRAYCLSPKSVFRIQFLNCVKLGAGIGAILGTAFGPFALKGQIPQIFNRLFPFSRGLCHAYWAPNVWAMYSFVDRVLIVLAPRLGLSVKEGALQSVTRGLVGDTAFAVLPDVTPRVCFALTLIFQAIPLLKLFAQPTWDNFIGAVTLCGYASFLFGWHVHEKAILLVIIPFSLIALKDRRYLGAFRPLAVAGHVSLFPLLFTPAEFPLKTVYTVFWLILFLMAFDRLAPASSRARFFLFDRFSTLYITISIPLIVYCSLGHGIVFGKSYEFLPLMFTSSYSAIGVVGSWVGFMVVYFTS</sequence>
<proteinExistence type="inferred from homology"/>
<feature type="chain" id="PRO_0000278330" description="Dolichyl pyrophosphate Glc1Man9GlcNAc2 alpha-1,3-glucosyltransferase">
    <location>
        <begin position="1"/>
        <end position="474"/>
    </location>
</feature>
<feature type="topological domain" description="Lumenal" evidence="2">
    <location>
        <begin position="1"/>
        <end position="3"/>
    </location>
</feature>
<feature type="transmembrane region" description="Helical" evidence="2">
    <location>
        <begin position="4"/>
        <end position="24"/>
    </location>
</feature>
<feature type="topological domain" description="Cytoplasmic" evidence="2">
    <location>
        <begin position="25"/>
        <end position="101"/>
    </location>
</feature>
<feature type="transmembrane region" description="Helical" evidence="2">
    <location>
        <begin position="102"/>
        <end position="122"/>
    </location>
</feature>
<feature type="topological domain" description="Lumenal" evidence="2">
    <location>
        <begin position="123"/>
        <end position="155"/>
    </location>
</feature>
<feature type="transmembrane region" description="Helical" evidence="2">
    <location>
        <begin position="156"/>
        <end position="176"/>
    </location>
</feature>
<feature type="topological domain" description="Cytoplasmic" evidence="2">
    <location>
        <begin position="177"/>
        <end position="193"/>
    </location>
</feature>
<feature type="transmembrane region" description="Helical" evidence="2">
    <location>
        <begin position="194"/>
        <end position="214"/>
    </location>
</feature>
<feature type="topological domain" description="Lumenal" evidence="2">
    <location>
        <begin position="215"/>
        <end position="234"/>
    </location>
</feature>
<feature type="transmembrane region" description="Helical" evidence="2">
    <location>
        <begin position="235"/>
        <end position="255"/>
    </location>
</feature>
<feature type="topological domain" description="Cytoplasmic" evidence="2">
    <location>
        <begin position="256"/>
        <end position="290"/>
    </location>
</feature>
<feature type="transmembrane region" description="Helical" evidence="2">
    <location>
        <begin position="291"/>
        <end position="311"/>
    </location>
</feature>
<feature type="topological domain" description="Lumenal" evidence="2">
    <location>
        <begin position="312"/>
        <end position="328"/>
    </location>
</feature>
<feature type="transmembrane region" description="Helical" evidence="2">
    <location>
        <begin position="329"/>
        <end position="349"/>
    </location>
</feature>
<feature type="topological domain" description="Cytoplasmic" evidence="2">
    <location>
        <begin position="350"/>
        <end position="355"/>
    </location>
</feature>
<feature type="transmembrane region" description="Helical" evidence="2">
    <location>
        <begin position="356"/>
        <end position="376"/>
    </location>
</feature>
<feature type="topological domain" description="Lumenal" evidence="2">
    <location>
        <begin position="377"/>
        <end position="378"/>
    </location>
</feature>
<feature type="transmembrane region" description="Helical" evidence="2">
    <location>
        <begin position="379"/>
        <end position="399"/>
    </location>
</feature>
<feature type="topological domain" description="Cytoplasmic" evidence="2">
    <location>
        <begin position="400"/>
        <end position="419"/>
    </location>
</feature>
<feature type="transmembrane region" description="Helical" evidence="2">
    <location>
        <begin position="420"/>
        <end position="440"/>
    </location>
</feature>
<feature type="topological domain" description="Lumenal" evidence="2">
    <location>
        <begin position="441"/>
        <end position="449"/>
    </location>
</feature>
<feature type="transmembrane region" description="Helical" evidence="2">
    <location>
        <begin position="450"/>
        <end position="470"/>
    </location>
</feature>
<feature type="topological domain" description="Cytoplasmic" evidence="2">
    <location>
        <begin position="471"/>
        <end position="474"/>
    </location>
</feature>
<keyword id="KW-0256">Endoplasmic reticulum</keyword>
<keyword id="KW-0328">Glycosyltransferase</keyword>
<keyword id="KW-0472">Membrane</keyword>
<keyword id="KW-1185">Reference proteome</keyword>
<keyword id="KW-0808">Transferase</keyword>
<keyword id="KW-0812">Transmembrane</keyword>
<keyword id="KW-1133">Transmembrane helix</keyword>
<name>ALG8_CHAGB</name>
<reference key="1">
    <citation type="journal article" date="2015" name="Genome Announc.">
        <title>Draft genome sequence of the cellulolytic fungus Chaetomium globosum.</title>
        <authorList>
            <person name="Cuomo C.A."/>
            <person name="Untereiner W.A."/>
            <person name="Ma L.-J."/>
            <person name="Grabherr M."/>
            <person name="Birren B.W."/>
        </authorList>
    </citation>
    <scope>NUCLEOTIDE SEQUENCE [LARGE SCALE GENOMIC DNA]</scope>
    <source>
        <strain>ATCC 6205 / CBS 148.51 / DSM 1962 / NBRC 6347 / NRRL 1970</strain>
    </source>
</reference>
<organism>
    <name type="scientific">Chaetomium globosum (strain ATCC 6205 / CBS 148.51 / DSM 1962 / NBRC 6347 / NRRL 1970)</name>
    <name type="common">Soil fungus</name>
    <dbReference type="NCBI Taxonomy" id="306901"/>
    <lineage>
        <taxon>Eukaryota</taxon>
        <taxon>Fungi</taxon>
        <taxon>Dikarya</taxon>
        <taxon>Ascomycota</taxon>
        <taxon>Pezizomycotina</taxon>
        <taxon>Sordariomycetes</taxon>
        <taxon>Sordariomycetidae</taxon>
        <taxon>Sordariales</taxon>
        <taxon>Chaetomiaceae</taxon>
        <taxon>Chaetomium</taxon>
    </lineage>
</organism>
<accession>Q2HA14</accession>
<protein>
    <recommendedName>
        <fullName evidence="1">Dolichyl pyrophosphate Glc1Man9GlcNAc2 alpha-1,3-glucosyltransferase</fullName>
        <ecNumber evidence="1">2.4.1.265</ecNumber>
    </recommendedName>
    <alternativeName>
        <fullName>Asparagine-linked glycosylation protein 8</fullName>
    </alternativeName>
    <alternativeName>
        <fullName>Dol-P-Glc:Glc(1)Man(9)GlcNAc(2)-PP-dolichyl alpha-1,3-glucosyltransferase</fullName>
    </alternativeName>
    <alternativeName>
        <fullName>Dolichyl-P-Glc:Glc1Man9GlcNAc2-PP-dolichyl glucosyltransferase</fullName>
    </alternativeName>
</protein>
<evidence type="ECO:0000250" key="1">
    <source>
        <dbReference type="UniProtKB" id="P40351"/>
    </source>
</evidence>
<evidence type="ECO:0000255" key="2"/>
<evidence type="ECO:0000305" key="3"/>
<dbReference type="EC" id="2.4.1.265" evidence="1"/>
<dbReference type="EMBL" id="CH408030">
    <property type="protein sequence ID" value="EAQ91005.1"/>
    <property type="molecule type" value="Genomic_DNA"/>
</dbReference>
<dbReference type="RefSeq" id="XP_001229456.1">
    <property type="nucleotide sequence ID" value="XM_001229455.1"/>
</dbReference>
<dbReference type="SMR" id="Q2HA14"/>
<dbReference type="FunCoup" id="Q2HA14">
    <property type="interactions" value="690"/>
</dbReference>
<dbReference type="STRING" id="306901.Q2HA14"/>
<dbReference type="GeneID" id="4389535"/>
<dbReference type="VEuPathDB" id="FungiDB:CHGG_02940"/>
<dbReference type="eggNOG" id="KOG2576">
    <property type="taxonomic scope" value="Eukaryota"/>
</dbReference>
<dbReference type="HOGENOM" id="CLU_022045_1_1_1"/>
<dbReference type="InParanoid" id="Q2HA14"/>
<dbReference type="OMA" id="YHSTDFD"/>
<dbReference type="OrthoDB" id="1689333at2759"/>
<dbReference type="UniPathway" id="UPA00378"/>
<dbReference type="Proteomes" id="UP000001056">
    <property type="component" value="Unassembled WGS sequence"/>
</dbReference>
<dbReference type="GO" id="GO:0005789">
    <property type="term" value="C:endoplasmic reticulum membrane"/>
    <property type="evidence" value="ECO:0000250"/>
    <property type="project" value="UniProtKB"/>
</dbReference>
<dbReference type="GO" id="GO:0042283">
    <property type="term" value="F:dolichyl pyrophosphate Glc1Man9GlcNAc2 alpha-1,3-glucosyltransferase activity"/>
    <property type="evidence" value="ECO:0000250"/>
    <property type="project" value="UniProtKB"/>
</dbReference>
<dbReference type="GO" id="GO:0006488">
    <property type="term" value="P:dolichol-linked oligosaccharide biosynthetic process"/>
    <property type="evidence" value="ECO:0000250"/>
    <property type="project" value="UniProtKB"/>
</dbReference>
<dbReference type="GO" id="GO:0006487">
    <property type="term" value="P:protein N-linked glycosylation"/>
    <property type="evidence" value="ECO:0000250"/>
    <property type="project" value="UniProtKB"/>
</dbReference>
<dbReference type="InterPro" id="IPR004856">
    <property type="entry name" value="Glyco_trans_ALG6/ALG8"/>
</dbReference>
<dbReference type="PANTHER" id="PTHR12413">
    <property type="entry name" value="DOLICHYL GLYCOSYLTRANSFERASE"/>
    <property type="match status" value="1"/>
</dbReference>
<dbReference type="PANTHER" id="PTHR12413:SF2">
    <property type="entry name" value="DOLICHYL PYROPHOSPHATE GLC1MAN9GLCNAC2 ALPHA-1,3-GLUCOSYLTRANSFERASE-RELATED"/>
    <property type="match status" value="1"/>
</dbReference>
<dbReference type="Pfam" id="PF03155">
    <property type="entry name" value="Alg6_Alg8"/>
    <property type="match status" value="2"/>
</dbReference>